<protein>
    <recommendedName>
        <fullName evidence="1">Argininosuccinate lyase</fullName>
        <shortName evidence="1">ASAL</shortName>
        <ecNumber evidence="1">4.3.2.1</ecNumber>
    </recommendedName>
    <alternativeName>
        <fullName evidence="1">Arginosuccinase</fullName>
    </alternativeName>
</protein>
<accession>C5CRT0</accession>
<feature type="chain" id="PRO_1000201707" description="Argininosuccinate lyase">
    <location>
        <begin position="1"/>
        <end position="465"/>
    </location>
</feature>
<gene>
    <name evidence="1" type="primary">argH</name>
    <name type="ordered locus">Vapar_1361</name>
</gene>
<reference key="1">
    <citation type="journal article" date="2011" name="J. Bacteriol.">
        <title>Complete genome sequence of the metabolically versatile plant growth-promoting endophyte, Variovorax paradoxus S110.</title>
        <authorList>
            <person name="Han J.I."/>
            <person name="Choi H.K."/>
            <person name="Lee S.W."/>
            <person name="Orwin P.M."/>
            <person name="Kim J."/>
            <person name="Laroe S.L."/>
            <person name="Kim T.G."/>
            <person name="O'Neil J."/>
            <person name="Leadbetter J.R."/>
            <person name="Lee S.Y."/>
            <person name="Hur C.G."/>
            <person name="Spain J.C."/>
            <person name="Ovchinnikova G."/>
            <person name="Goodwin L."/>
            <person name="Han C."/>
        </authorList>
    </citation>
    <scope>NUCLEOTIDE SEQUENCE [LARGE SCALE GENOMIC DNA]</scope>
    <source>
        <strain>S110</strain>
    </source>
</reference>
<organism>
    <name type="scientific">Variovorax paradoxus (strain S110)</name>
    <dbReference type="NCBI Taxonomy" id="543728"/>
    <lineage>
        <taxon>Bacteria</taxon>
        <taxon>Pseudomonadati</taxon>
        <taxon>Pseudomonadota</taxon>
        <taxon>Betaproteobacteria</taxon>
        <taxon>Burkholderiales</taxon>
        <taxon>Comamonadaceae</taxon>
        <taxon>Variovorax</taxon>
    </lineage>
</organism>
<dbReference type="EC" id="4.3.2.1" evidence="1"/>
<dbReference type="EMBL" id="CP001635">
    <property type="protein sequence ID" value="ACS18012.1"/>
    <property type="molecule type" value="Genomic_DNA"/>
</dbReference>
<dbReference type="SMR" id="C5CRT0"/>
<dbReference type="STRING" id="543728.Vapar_1361"/>
<dbReference type="KEGG" id="vap:Vapar_1361"/>
<dbReference type="eggNOG" id="COG0165">
    <property type="taxonomic scope" value="Bacteria"/>
</dbReference>
<dbReference type="HOGENOM" id="CLU_027272_2_3_4"/>
<dbReference type="OrthoDB" id="9769623at2"/>
<dbReference type="UniPathway" id="UPA00068">
    <property type="reaction ID" value="UER00114"/>
</dbReference>
<dbReference type="GO" id="GO:0005829">
    <property type="term" value="C:cytosol"/>
    <property type="evidence" value="ECO:0007669"/>
    <property type="project" value="TreeGrafter"/>
</dbReference>
<dbReference type="GO" id="GO:0004056">
    <property type="term" value="F:argininosuccinate lyase activity"/>
    <property type="evidence" value="ECO:0007669"/>
    <property type="project" value="UniProtKB-UniRule"/>
</dbReference>
<dbReference type="GO" id="GO:0042450">
    <property type="term" value="P:arginine biosynthetic process via ornithine"/>
    <property type="evidence" value="ECO:0007669"/>
    <property type="project" value="InterPro"/>
</dbReference>
<dbReference type="GO" id="GO:0006526">
    <property type="term" value="P:L-arginine biosynthetic process"/>
    <property type="evidence" value="ECO:0007669"/>
    <property type="project" value="UniProtKB-UniRule"/>
</dbReference>
<dbReference type="CDD" id="cd01359">
    <property type="entry name" value="Argininosuccinate_lyase"/>
    <property type="match status" value="1"/>
</dbReference>
<dbReference type="FunFam" id="1.10.275.10:FF:000002">
    <property type="entry name" value="Argininosuccinate lyase"/>
    <property type="match status" value="1"/>
</dbReference>
<dbReference type="FunFam" id="1.10.40.30:FF:000001">
    <property type="entry name" value="Argininosuccinate lyase"/>
    <property type="match status" value="1"/>
</dbReference>
<dbReference type="FunFam" id="1.20.200.10:FF:000015">
    <property type="entry name" value="argininosuccinate lyase isoform X2"/>
    <property type="match status" value="1"/>
</dbReference>
<dbReference type="Gene3D" id="1.10.40.30">
    <property type="entry name" value="Fumarase/aspartase (C-terminal domain)"/>
    <property type="match status" value="1"/>
</dbReference>
<dbReference type="Gene3D" id="1.20.200.10">
    <property type="entry name" value="Fumarase/aspartase (Central domain)"/>
    <property type="match status" value="1"/>
</dbReference>
<dbReference type="Gene3D" id="1.10.275.10">
    <property type="entry name" value="Fumarase/aspartase (N-terminal domain)"/>
    <property type="match status" value="1"/>
</dbReference>
<dbReference type="HAMAP" id="MF_00006">
    <property type="entry name" value="Arg_succ_lyase"/>
    <property type="match status" value="1"/>
</dbReference>
<dbReference type="InterPro" id="IPR029419">
    <property type="entry name" value="Arg_succ_lyase_C"/>
</dbReference>
<dbReference type="InterPro" id="IPR009049">
    <property type="entry name" value="Argininosuccinate_lyase"/>
</dbReference>
<dbReference type="InterPro" id="IPR024083">
    <property type="entry name" value="Fumarase/histidase_N"/>
</dbReference>
<dbReference type="InterPro" id="IPR020557">
    <property type="entry name" value="Fumarate_lyase_CS"/>
</dbReference>
<dbReference type="InterPro" id="IPR000362">
    <property type="entry name" value="Fumarate_lyase_fam"/>
</dbReference>
<dbReference type="InterPro" id="IPR022761">
    <property type="entry name" value="Fumarate_lyase_N"/>
</dbReference>
<dbReference type="InterPro" id="IPR008948">
    <property type="entry name" value="L-Aspartase-like"/>
</dbReference>
<dbReference type="NCBIfam" id="TIGR00838">
    <property type="entry name" value="argH"/>
    <property type="match status" value="1"/>
</dbReference>
<dbReference type="PANTHER" id="PTHR43814">
    <property type="entry name" value="ARGININOSUCCINATE LYASE"/>
    <property type="match status" value="1"/>
</dbReference>
<dbReference type="PANTHER" id="PTHR43814:SF1">
    <property type="entry name" value="ARGININOSUCCINATE LYASE"/>
    <property type="match status" value="1"/>
</dbReference>
<dbReference type="Pfam" id="PF14698">
    <property type="entry name" value="ASL_C2"/>
    <property type="match status" value="1"/>
</dbReference>
<dbReference type="Pfam" id="PF00206">
    <property type="entry name" value="Lyase_1"/>
    <property type="match status" value="1"/>
</dbReference>
<dbReference type="PRINTS" id="PR00145">
    <property type="entry name" value="ARGSUCLYASE"/>
</dbReference>
<dbReference type="PRINTS" id="PR00149">
    <property type="entry name" value="FUMRATELYASE"/>
</dbReference>
<dbReference type="SUPFAM" id="SSF48557">
    <property type="entry name" value="L-aspartase-like"/>
    <property type="match status" value="1"/>
</dbReference>
<dbReference type="PROSITE" id="PS00163">
    <property type="entry name" value="FUMARATE_LYASES"/>
    <property type="match status" value="1"/>
</dbReference>
<keyword id="KW-0028">Amino-acid biosynthesis</keyword>
<keyword id="KW-0055">Arginine biosynthesis</keyword>
<keyword id="KW-0963">Cytoplasm</keyword>
<keyword id="KW-0456">Lyase</keyword>
<comment type="catalytic activity">
    <reaction evidence="1">
        <text>2-(N(omega)-L-arginino)succinate = fumarate + L-arginine</text>
        <dbReference type="Rhea" id="RHEA:24020"/>
        <dbReference type="ChEBI" id="CHEBI:29806"/>
        <dbReference type="ChEBI" id="CHEBI:32682"/>
        <dbReference type="ChEBI" id="CHEBI:57472"/>
        <dbReference type="EC" id="4.3.2.1"/>
    </reaction>
</comment>
<comment type="pathway">
    <text evidence="1">Amino-acid biosynthesis; L-arginine biosynthesis; L-arginine from L-ornithine and carbamoyl phosphate: step 3/3.</text>
</comment>
<comment type="subcellular location">
    <subcellularLocation>
        <location evidence="1">Cytoplasm</location>
    </subcellularLocation>
</comment>
<comment type="similarity">
    <text evidence="1">Belongs to the lyase 1 family. Argininosuccinate lyase subfamily.</text>
</comment>
<name>ARLY_VARPS</name>
<proteinExistence type="inferred from homology"/>
<sequence length="465" mass="51439">MTQNQLDKKSEAWSALFSEPMSDLVKRYTASVFFDKRLWQADIEGSLAHAGMLAAQGIIGKQDHAEIERGMAQIRAEIESGAFEWKLDLEDVHLNIEARLTQLVGDAGKRLHTGRSRNDQVATDVRLWLRGEIDLIAELLVALQLSLVDIAEKNVEVILPGFTHLQVAQPVSFGHHMLAYVEMFSRDAERLQDVRKRVNRLPLGAAALAGTSYPLDRELVARTLKMDGVCQNSLDAVSDRDFAIEFTAAASLCMVHVSRMSEELILWMSQNFGFIQIADRFTTGSSIMPQKKNPDVPELARGKTGRVVGHLMALITLMKGQPLAYNKDNQEDKEPLFDTVDTLKDTLRIFAEMIGGITVKPEAMEAAALRGYATATDLADYLVKKGLPFRDAHETVAHAVKAATSHKVDLAELPLAVLQQFNPNIEKDVYDVLSLRGSLNARNILGGTAPAQVKAQIARHRARLA</sequence>
<evidence type="ECO:0000255" key="1">
    <source>
        <dbReference type="HAMAP-Rule" id="MF_00006"/>
    </source>
</evidence>